<accession>A0A6B9L3M7</accession>
<comment type="function">
    <text evidence="1">Inhibits trypsin activity and prophenoloxidase (PPO) activation, an enzyme essential for both clotting and insect innate immune responses. It does not inhibit activity of chymotrypsin and protease K, and has no effect on phenoloxidase (PO) activity.</text>
</comment>
<comment type="subcellular location">
    <subcellularLocation>
        <location evidence="4">Secreted</location>
    </subcellularLocation>
</comment>
<comment type="tissue specificity">
    <text evidence="7">Expressed by the venom gland.</text>
</comment>
<comment type="similarity">
    <text evidence="6">Belongs to the protease inhibitor I19 family.</text>
</comment>
<dbReference type="EMBL" id="MN208343">
    <property type="protein sequence ID" value="QHB21532.1"/>
    <property type="molecule type" value="mRNA"/>
</dbReference>
<dbReference type="SMR" id="A0A6B9L3M7"/>
<dbReference type="GO" id="GO:0005576">
    <property type="term" value="C:extracellular region"/>
    <property type="evidence" value="ECO:0007669"/>
    <property type="project" value="UniProtKB-SubCell"/>
</dbReference>
<dbReference type="GO" id="GO:0004867">
    <property type="term" value="F:serine-type endopeptidase inhibitor activity"/>
    <property type="evidence" value="ECO:0007669"/>
    <property type="project" value="UniProtKB-KW"/>
</dbReference>
<dbReference type="InterPro" id="IPR008037">
    <property type="entry name" value="Pacifastin_dom"/>
</dbReference>
<dbReference type="InterPro" id="IPR036201">
    <property type="entry name" value="Pacifastin_dom_sf"/>
</dbReference>
<dbReference type="Pfam" id="PF05375">
    <property type="entry name" value="Pacifastin_I"/>
    <property type="match status" value="1"/>
</dbReference>
<dbReference type="SUPFAM" id="SSF57283">
    <property type="entry name" value="PMP inhibitors"/>
    <property type="match status" value="2"/>
</dbReference>
<dbReference type="PROSITE" id="PS51446">
    <property type="entry name" value="PACIFASTIN"/>
    <property type="match status" value="2"/>
</dbReference>
<feature type="signal peptide" evidence="2">
    <location>
        <begin position="1"/>
        <end position="20"/>
    </location>
</feature>
<feature type="chain" id="PRO_5025501165" description="U-reduvitoxin-Pr12a.1" evidence="4">
    <location>
        <begin position="21"/>
        <end position="56"/>
    </location>
</feature>
<feature type="chain" id="PRO_0000454316" description="U-reduvitoxin-Pr12a.2" evidence="7">
    <location>
        <begin position="57"/>
        <end position="96"/>
    </location>
</feature>
<feature type="domain" description="Pacifastin 1" evidence="6">
    <location>
        <begin position="21"/>
        <end position="55"/>
    </location>
</feature>
<feature type="domain" description="Pacifastin 2" evidence="3">
    <location>
        <begin position="59"/>
        <end position="94"/>
    </location>
</feature>
<feature type="region of interest" description="Pro-Pro-Arg motif necessary for proteolytic processing" evidence="7">
    <location>
        <begin position="54"/>
        <end position="56"/>
    </location>
</feature>
<feature type="site" description="Reactive bond" evidence="3">
    <location>
        <begin position="88"/>
        <end position="89"/>
    </location>
</feature>
<feature type="disulfide bond" evidence="3">
    <location>
        <begin position="21"/>
        <end position="38"/>
    </location>
</feature>
<feature type="disulfide bond" evidence="7">
    <location>
        <begin position="33"/>
        <end position="53"/>
    </location>
</feature>
<feature type="disulfide bond" evidence="3">
    <location>
        <begin position="36"/>
        <end position="47"/>
    </location>
</feature>
<feature type="disulfide bond" evidence="3">
    <location>
        <begin position="62"/>
        <end position="77"/>
    </location>
</feature>
<feature type="disulfide bond" evidence="3">
    <location>
        <begin position="72"/>
        <end position="91"/>
    </location>
</feature>
<feature type="disulfide bond" evidence="3">
    <location>
        <begin position="75"/>
        <end position="86"/>
    </location>
</feature>
<proteinExistence type="evidence at protein level"/>
<sequence>MKTALLLFFALVFIAFETEACRPGALTVAPDGCNMCTCLSNGKLGRCTHDLICPPRMFKLECEPGKPFKNDCNDCICSEDGLTAKCTRKLCIHKKP</sequence>
<evidence type="ECO:0000250" key="1">
    <source>
        <dbReference type="UniProtKB" id="A0A7M6UNN1"/>
    </source>
</evidence>
<evidence type="ECO:0000255" key="2"/>
<evidence type="ECO:0000255" key="3">
    <source>
        <dbReference type="PROSITE-ProRule" id="PRU00776"/>
    </source>
</evidence>
<evidence type="ECO:0000269" key="4">
    <source>
    </source>
</evidence>
<evidence type="ECO:0000303" key="5">
    <source>
    </source>
</evidence>
<evidence type="ECO:0000305" key="6"/>
<evidence type="ECO:0000305" key="7">
    <source>
    </source>
</evidence>
<evidence type="ECO:0000312" key="8">
    <source>
        <dbReference type="EMBL" id="QHB21532.1"/>
    </source>
</evidence>
<keyword id="KW-1015">Disulfide bond</keyword>
<keyword id="KW-0646">Protease inhibitor</keyword>
<keyword id="KW-0677">Repeat</keyword>
<keyword id="KW-0964">Secreted</keyword>
<keyword id="KW-0722">Serine protease inhibitor</keyword>
<keyword id="KW-0732">Signal</keyword>
<reference key="1">
    <citation type="journal article" date="2019" name="Toxins">
        <title>Missiles of mass disruption: composition and glandular origin of venom used as a projectile defensive weapon by the assassin bug Platymeris rhadamanthus.</title>
        <authorList>
            <person name="Walker A.A."/>
            <person name="Robinson S.D."/>
            <person name="Undheim E.A.B."/>
            <person name="Jin J."/>
            <person name="Han X."/>
            <person name="Fry B.G."/>
            <person name="Vetter I."/>
            <person name="King G.F."/>
        </authorList>
    </citation>
    <scope>NUCLEOTIDE SEQUENCE [MRNA]</scope>
    <scope>IDENTIFICATION BY MASS SPECTROMETRY</scope>
    <scope>SUBCELLULAR LOCATION</scope>
    <source>
        <tissue>Venom</tissue>
        <tissue>Venom gland</tissue>
    </source>
</reference>
<organism>
    <name type="scientific">Platymeris rhadamanthus</name>
    <name type="common">Red spot assassin bug</name>
    <dbReference type="NCBI Taxonomy" id="1134088"/>
    <lineage>
        <taxon>Eukaryota</taxon>
        <taxon>Metazoa</taxon>
        <taxon>Ecdysozoa</taxon>
        <taxon>Arthropoda</taxon>
        <taxon>Hexapoda</taxon>
        <taxon>Insecta</taxon>
        <taxon>Pterygota</taxon>
        <taxon>Neoptera</taxon>
        <taxon>Paraneoptera</taxon>
        <taxon>Hemiptera</taxon>
        <taxon>Heteroptera</taxon>
        <taxon>Panheteroptera</taxon>
        <taxon>Cimicomorpha</taxon>
        <taxon>Reduviidae</taxon>
        <taxon>Platymeris</taxon>
    </lineage>
</organism>
<protein>
    <recommendedName>
        <fullName evidence="5">U-reduvitoxin-Pr12a</fullName>
        <shortName evidence="5">U-RDTX-Pr12a</shortName>
    </recommendedName>
    <alternativeName>
        <fullName evidence="8">Venom pacifastin domain peptide Pr12a</fullName>
    </alternativeName>
    <component>
        <recommendedName>
            <fullName evidence="5">U-reduvitoxin-Pr12a.1</fullName>
            <shortName evidence="5">U-RDTX-Pr12a.1</shortName>
        </recommendedName>
    </component>
    <component>
        <recommendedName>
            <fullName evidence="5">U-reduvitoxin-Pr12a.2</fullName>
            <shortName evidence="5">U-RDTX-Pr12a.2</shortName>
        </recommendedName>
    </component>
</protein>
<name>PI12A_PLARH</name>